<reference key="1">
    <citation type="journal article" date="1992" name="Proc. Natl. Acad. Sci. U.S.A.">
        <title>Evolutionary conservation pattern of zinc-finger domains of Drosophila segmentation genes.</title>
        <authorList>
            <person name="Sommer R.J."/>
            <person name="Retzlaff M."/>
            <person name="Goerlich K."/>
            <person name="Sander K."/>
            <person name="Tautz D."/>
        </authorList>
    </citation>
    <scope>NUCLEOTIDE SEQUENCE [GENOMIC DNA]</scope>
</reference>
<organism>
    <name type="scientific">Calliphora vicina</name>
    <name type="common">Blue blowfly</name>
    <name type="synonym">Calliphora erythrocephala</name>
    <dbReference type="NCBI Taxonomy" id="7373"/>
    <lineage>
        <taxon>Eukaryota</taxon>
        <taxon>Metazoa</taxon>
        <taxon>Ecdysozoa</taxon>
        <taxon>Arthropoda</taxon>
        <taxon>Hexapoda</taxon>
        <taxon>Insecta</taxon>
        <taxon>Pterygota</taxon>
        <taxon>Neoptera</taxon>
        <taxon>Endopterygota</taxon>
        <taxon>Diptera</taxon>
        <taxon>Brachycera</taxon>
        <taxon>Muscomorpha</taxon>
        <taxon>Oestroidea</taxon>
        <taxon>Calliphoridae</taxon>
        <taxon>Calliphorinae</taxon>
        <taxon>Calliphora</taxon>
    </lineage>
</organism>
<keyword id="KW-0217">Developmental protein</keyword>
<keyword id="KW-0238">DNA-binding</keyword>
<keyword id="KW-0302">Gap protein</keyword>
<keyword id="KW-0479">Metal-binding</keyword>
<keyword id="KW-0539">Nucleus</keyword>
<keyword id="KW-0677">Repeat</keyword>
<keyword id="KW-0862">Zinc</keyword>
<keyword id="KW-0863">Zinc-finger</keyword>
<proteinExistence type="inferred from homology"/>
<protein>
    <recommendedName>
        <fullName>Protein hunchback</fullName>
    </recommendedName>
</protein>
<feature type="chain" id="PRO_0000046971" description="Protein hunchback">
    <location>
        <begin position="1" status="less than"/>
        <end position="54" status="greater than"/>
    </location>
</feature>
<feature type="zinc finger region" description="C2H2-type 1" evidence="2">
    <location>
        <begin position="1" status="less than"/>
        <end position="3"/>
    </location>
</feature>
<feature type="zinc finger region" description="C2H2-type 2" evidence="2">
    <location>
        <begin position="9"/>
        <end position="31"/>
    </location>
</feature>
<feature type="zinc finger region" description="C2H2-type 3" evidence="2">
    <location>
        <begin position="37"/>
        <end position="54" status="greater than"/>
    </location>
</feature>
<feature type="non-terminal residue">
    <location>
        <position position="1"/>
    </location>
</feature>
<feature type="non-terminal residue">
    <location>
        <position position="54"/>
    </location>
</feature>
<dbReference type="EMBL" id="L01591">
    <property type="protein sequence ID" value="AAA28233.1"/>
    <property type="molecule type" value="Genomic_DNA"/>
</dbReference>
<dbReference type="SMR" id="P31506"/>
<dbReference type="GO" id="GO:0005634">
    <property type="term" value="C:nucleus"/>
    <property type="evidence" value="ECO:0007669"/>
    <property type="project" value="UniProtKB-SubCell"/>
</dbReference>
<dbReference type="GO" id="GO:0003677">
    <property type="term" value="F:DNA binding"/>
    <property type="evidence" value="ECO:0007669"/>
    <property type="project" value="UniProtKB-KW"/>
</dbReference>
<dbReference type="GO" id="GO:0008270">
    <property type="term" value="F:zinc ion binding"/>
    <property type="evidence" value="ECO:0007669"/>
    <property type="project" value="UniProtKB-KW"/>
</dbReference>
<dbReference type="GO" id="GO:0035282">
    <property type="term" value="P:segmentation"/>
    <property type="evidence" value="ECO:0007669"/>
    <property type="project" value="UniProtKB-KW"/>
</dbReference>
<dbReference type="FunFam" id="3.30.160.60:FF:001301">
    <property type="entry name" value="Blast:Protein hunchback"/>
    <property type="match status" value="1"/>
</dbReference>
<dbReference type="Gene3D" id="3.30.160.60">
    <property type="entry name" value="Classic Zinc Finger"/>
    <property type="match status" value="1"/>
</dbReference>
<dbReference type="InterPro" id="IPR036236">
    <property type="entry name" value="Znf_C2H2_sf"/>
</dbReference>
<dbReference type="InterPro" id="IPR013087">
    <property type="entry name" value="Znf_C2H2_type"/>
</dbReference>
<dbReference type="SUPFAM" id="SSF57667">
    <property type="entry name" value="beta-beta-alpha zinc fingers"/>
    <property type="match status" value="1"/>
</dbReference>
<dbReference type="PROSITE" id="PS00028">
    <property type="entry name" value="ZINC_FINGER_C2H2_1"/>
    <property type="match status" value="1"/>
</dbReference>
<dbReference type="PROSITE" id="PS50157">
    <property type="entry name" value="ZINC_FINGER_C2H2_2"/>
    <property type="match status" value="1"/>
</dbReference>
<evidence type="ECO:0000250" key="1"/>
<evidence type="ECO:0000255" key="2">
    <source>
        <dbReference type="PROSITE-ProRule" id="PRU00042"/>
    </source>
</evidence>
<evidence type="ECO:0000305" key="3"/>
<comment type="function">
    <text evidence="1">Gap class segmentation protein that controls development of head structures.</text>
</comment>
<comment type="subcellular location">
    <subcellularLocation>
        <location evidence="3">Nucleus</location>
    </subcellularLocation>
</comment>
<comment type="similarity">
    <text evidence="3">Belongs to the hunchback C2H2-type zinc-finger protein family.</text>
</comment>
<sequence>RKHKNLKPFQCDKCSYSCVNKSMLNSHRKFHSSVYQYRCADCDYATKYCHSFKL</sequence>
<gene>
    <name type="primary">hb</name>
</gene>
<accession>P31506</accession>
<name>HUNB_CALVI</name>